<keyword id="KW-0002">3D-structure</keyword>
<keyword id="KW-0997">Cell inner membrane</keyword>
<keyword id="KW-1003">Cell membrane</keyword>
<keyword id="KW-0249">Electron transport</keyword>
<keyword id="KW-0472">Membrane</keyword>
<keyword id="KW-1185">Reference proteome</keyword>
<keyword id="KW-0346">Stress response</keyword>
<keyword id="KW-1278">Translocase</keyword>
<keyword id="KW-0812">Transmembrane</keyword>
<keyword id="KW-1133">Transmembrane helix</keyword>
<keyword id="KW-0813">Transport</keyword>
<name>CYDX_ECOLI</name>
<sequence length="37" mass="4042">MWYFAWILGTLLACSFGVITALALEHVESGKAGQEDI</sequence>
<proteinExistence type="evidence at protein level"/>
<comment type="function">
    <text>Required for correct functioning of cytochrome bd-I oxidase. This protein and AppX may have some functional overlap.</text>
</comment>
<comment type="catalytic activity">
    <reaction>
        <text>2 a ubiquinol + O2(in) + 4 H(+)(in) = 2 a ubiquinone + 2 H2O(in) + 4 H(+)(out)</text>
        <dbReference type="Rhea" id="RHEA:40527"/>
        <dbReference type="Rhea" id="RHEA-COMP:9565"/>
        <dbReference type="Rhea" id="RHEA-COMP:9566"/>
        <dbReference type="ChEBI" id="CHEBI:15377"/>
        <dbReference type="ChEBI" id="CHEBI:15378"/>
        <dbReference type="ChEBI" id="CHEBI:15379"/>
        <dbReference type="ChEBI" id="CHEBI:16389"/>
        <dbReference type="ChEBI" id="CHEBI:17976"/>
        <dbReference type="EC" id="7.1.1.7"/>
    </reaction>
</comment>
<comment type="pathway">
    <text>Energy metabolism; oxidative phosphorylation.</text>
</comment>
<comment type="subunit">
    <text evidence="5">May be a subunit of cytochrome bd-I ubiquinol oxidase. Probably interacts with CydA and CydB.</text>
</comment>
<comment type="subcellular location">
    <subcellularLocation>
        <location evidence="6">Cell inner membrane</location>
        <topology evidence="6">Single-pass membrane protein</topology>
    </subcellularLocation>
    <text evidence="2 4">In sucrose cushions fractionates with both the inner and outer membranes.</text>
</comment>
<comment type="induction">
    <text evidence="2 3">Constitutively expressed during aerobic growth (PubMed:19121005), induced in low oxygen, and maybe by SDS/EDTA (envelope stress) (PubMed:19734316) (at protein level).</text>
</comment>
<comment type="disruption phenotype">
    <text evidence="5">Slow growth in aerobic liquid culture, forms mixed colonies on aerobic solid media, increased sensitivity to reductant (beta-mercapoethanol). Reduced cytochrome bd-I oxidase activity.</text>
</comment>
<comment type="similarity">
    <text evidence="6">Belongs to the cytochrome ubiquinol oxidase subunit X family.</text>
</comment>
<comment type="sequence caution" evidence="6">
    <conflict type="frameshift">
        <sequence resource="EMBL" id="J03939"/>
    </conflict>
</comment>
<reference key="1">
    <citation type="journal article" date="1988" name="J. Biol. Chem.">
        <title>The nucleotide sequence of the cyd locus encoding the two subunits of the cytochrome d terminal oxidase complex of Escherichia coli.</title>
        <authorList>
            <person name="Green G.N."/>
            <person name="Fang H."/>
            <person name="Lin R.-J."/>
            <person name="Newton G."/>
            <person name="Mather M."/>
            <person name="Georgiou C.D."/>
            <person name="Gennis R.B."/>
        </authorList>
    </citation>
    <scope>NUCLEOTIDE SEQUENCE [GENOMIC DNA]</scope>
</reference>
<reference key="2">
    <citation type="submission" date="1995-07" db="EMBL/GenBank/DDBJ databases">
        <authorList>
            <person name="Kim K."/>
            <person name="Allen E."/>
            <person name="Araujo R."/>
            <person name="Aparicio A.M."/>
            <person name="Botstein D."/>
            <person name="Cherry M."/>
            <person name="Chung E."/>
            <person name="Dietrich F."/>
            <person name="Duncan M."/>
            <person name="Federspiel N."/>
            <person name="Kalman S."/>
            <person name="Komp C."/>
            <person name="Lashkari D."/>
            <person name="Lew H."/>
            <person name="Lin D."/>
            <person name="Namath A."/>
            <person name="Oefner P."/>
            <person name="Davis R."/>
        </authorList>
    </citation>
    <scope>NUCLEOTIDE SEQUENCE [GENOMIC DNA]</scope>
    <source>
        <strain>K12 / MG1655 / ATCC 47076</strain>
    </source>
</reference>
<reference key="3">
    <citation type="journal article" date="1997" name="Science">
        <title>The complete genome sequence of Escherichia coli K-12.</title>
        <authorList>
            <person name="Blattner F.R."/>
            <person name="Plunkett G. III"/>
            <person name="Bloch C.A."/>
            <person name="Perna N.T."/>
            <person name="Burland V."/>
            <person name="Riley M."/>
            <person name="Collado-Vides J."/>
            <person name="Glasner J.D."/>
            <person name="Rode C.K."/>
            <person name="Mayhew G.F."/>
            <person name="Gregor J."/>
            <person name="Davis N.W."/>
            <person name="Kirkpatrick H.A."/>
            <person name="Goeden M.A."/>
            <person name="Rose D.J."/>
            <person name="Mau B."/>
            <person name="Shao Y."/>
        </authorList>
    </citation>
    <scope>NUCLEOTIDE SEQUENCE [LARGE SCALE GENOMIC DNA]</scope>
    <source>
        <strain>K12 / MG1655 / ATCC 47076</strain>
    </source>
</reference>
<reference key="4">
    <citation type="journal article" date="2006" name="Mol. Syst. Biol.">
        <title>Highly accurate genome sequences of Escherichia coli K-12 strains MG1655 and W3110.</title>
        <authorList>
            <person name="Hayashi K."/>
            <person name="Morooka N."/>
            <person name="Yamamoto Y."/>
            <person name="Fujita K."/>
            <person name="Isono K."/>
            <person name="Choi S."/>
            <person name="Ohtsubo E."/>
            <person name="Baba T."/>
            <person name="Wanner B.L."/>
            <person name="Mori H."/>
            <person name="Horiuchi T."/>
        </authorList>
    </citation>
    <scope>NUCLEOTIDE SEQUENCE [LARGE SCALE GENOMIC DNA]</scope>
    <source>
        <strain>K12 / W3110 / ATCC 27325 / DSM 5911</strain>
    </source>
</reference>
<reference key="5">
    <citation type="journal article" date="1994" name="Nucleic Acids Res.">
        <title>Intrinsic and extrinsic approaches for detecting genes in a bacterial genome.</title>
        <authorList>
            <person name="Borodovsky M."/>
            <person name="Rudd K.E."/>
            <person name="Koonin E.V."/>
        </authorList>
    </citation>
    <scope>IDENTIFICATION</scope>
</reference>
<reference key="6">
    <citation type="journal article" date="1997" name="J. Bacteriol.">
        <title>Characterization of the tol-pal and cyd region of Escherichia coli K-12: transcript analysis and identification of two new proteins encoded by the cyd operon.</title>
        <authorList>
            <person name="Muller M.M."/>
            <person name="Webster R.E."/>
        </authorList>
    </citation>
    <scope>IDENTIFICATION</scope>
    <source>
        <strain>K12 / MG1655 / ATCC 47076</strain>
    </source>
</reference>
<reference key="7">
    <citation type="journal article" date="2008" name="Mol. Microbiol.">
        <title>Small membrane proteins found by comparative genomics and ribosome binding site models.</title>
        <authorList>
            <person name="Hemm M.R."/>
            <person name="Paul B.J."/>
            <person name="Schneider T.D."/>
            <person name="Storz G."/>
            <person name="Rudd K.E."/>
        </authorList>
    </citation>
    <scope>SUBCELLULAR LOCATION</scope>
    <scope>INDUCTION</scope>
    <source>
        <strain>K12 / MG1655 / ATCC 47076</strain>
    </source>
</reference>
<reference key="8">
    <citation type="journal article" date="2010" name="J. Bacteriol.">
        <title>Small stress response proteins in Escherichia coli: proteins missed by classical proteomic studies.</title>
        <authorList>
            <person name="Hemm M.R."/>
            <person name="Paul B.J."/>
            <person name="Miranda-Rios J."/>
            <person name="Zhang A."/>
            <person name="Soltanzad N."/>
            <person name="Storz G."/>
        </authorList>
    </citation>
    <scope>INDUCTION BY STRESS</scope>
    <source>
        <strain>K12 / MG1655 / ATCC 47076</strain>
    </source>
</reference>
<reference key="9">
    <citation type="journal article" date="2011" name="J. Biol. Chem.">
        <title>Membrane localization of small proteins in Escherichia coli.</title>
        <authorList>
            <person name="Fontaine F."/>
            <person name="Fuchs R.T."/>
            <person name="Storz G."/>
        </authorList>
    </citation>
    <scope>SUBCELLULAR LOCATION</scope>
    <scope>TOPOLOGY</scope>
    <source>
        <strain>K12 / MG1655 / ATCC 47076</strain>
    </source>
</reference>
<reference key="10">
    <citation type="journal article" date="2013" name="J. Bacteriol.">
        <title>The Escherichia coli CydX protein is a member of the CydAB cytochrome bd oxidase complex and is required for cytochrome bd oxidase activity.</title>
        <authorList>
            <person name="Vanorsdel C.E."/>
            <person name="Bhatt S."/>
            <person name="Allen R.J."/>
            <person name="Brenner E.P."/>
            <person name="Hobson J.J."/>
            <person name="Jamil A."/>
            <person name="Haynes B.M."/>
            <person name="Genson A.M."/>
            <person name="Hemm M.R."/>
        </authorList>
    </citation>
    <scope>PROBABLE INTERACTION WITH CYDA AND CYDB</scope>
    <scope>SUBUNIT</scope>
    <scope>DISRUPTION PHENOTYPE</scope>
    <scope>MUTAGENESIS OF MET-1; PHE-4; ILE-7; LEU-12; CYS-14 AND ALA-21</scope>
    <source>
        <strain>K12 / MG1655 / ATCC 47076</strain>
    </source>
</reference>
<feature type="chain" id="PRO_0000168701" description="Cytochrome bd-I ubiquinol oxidase subunit X">
    <location>
        <begin position="1"/>
        <end position="37"/>
    </location>
</feature>
<feature type="transmembrane region" description="Helical" evidence="1">
    <location>
        <begin position="4"/>
        <end position="24"/>
    </location>
</feature>
<feature type="mutagenesis site" description="Does not restore reductant (beta-mercapoethanol) resistance." evidence="5">
    <original>M</original>
    <variation>Q</variation>
    <location>
        <position position="1"/>
    </location>
</feature>
<feature type="mutagenesis site" description="Does not restore reductant (beta-mercapoethanol) resistance." evidence="5">
    <original>F</original>
    <variation>A</variation>
    <location>
        <position position="4"/>
    </location>
</feature>
<feature type="mutagenesis site" description="Does not restore reductant (beta-mercapoethanol) resistance." evidence="5">
    <original>I</original>
    <variation>A</variation>
    <location>
        <position position="7"/>
    </location>
</feature>
<feature type="mutagenesis site" description="Does not restore reductant (beta-mercapoethanol) resistance." evidence="5">
    <original>L</original>
    <variation>A</variation>
    <location>
        <position position="12"/>
    </location>
</feature>
<feature type="mutagenesis site" description="Restores reductant (beta-mercapoethanol) resistance." evidence="5">
    <original>C</original>
    <variation>S</variation>
    <location>
        <position position="14"/>
    </location>
</feature>
<feature type="mutagenesis site" description="Does not restore reductant (beta-mercapoethanol) resistance." evidence="5">
    <original>A</original>
    <variation>G</variation>
    <location>
        <position position="21"/>
    </location>
</feature>
<feature type="helix" evidence="7">
    <location>
        <begin position="6"/>
        <end position="9"/>
    </location>
</feature>
<feature type="helix" evidence="7">
    <location>
        <begin position="10"/>
        <end position="27"/>
    </location>
</feature>
<protein>
    <recommendedName>
        <fullName>Cytochrome bd-I ubiquinol oxidase subunit X</fullName>
        <ecNumber>7.1.1.7</ecNumber>
    </recommendedName>
    <alternativeName>
        <fullName>Cytochrome bd-I oxidase subunit X</fullName>
    </alternativeName>
    <alternativeName>
        <fullName>Cytochrome d ubiquinol oxidase subunit X</fullName>
    </alternativeName>
</protein>
<dbReference type="EC" id="7.1.1.7"/>
<dbReference type="EMBL" id="J03939">
    <property type="status" value="NOT_ANNOTATED_CDS"/>
    <property type="molecule type" value="Unassigned_DNA"/>
</dbReference>
<dbReference type="EMBL" id="U30934">
    <property type="status" value="NOT_ANNOTATED_CDS"/>
    <property type="molecule type" value="Genomic_DNA"/>
</dbReference>
<dbReference type="EMBL" id="U00096">
    <property type="protein sequence ID" value="ABD18645.1"/>
    <property type="molecule type" value="Genomic_DNA"/>
</dbReference>
<dbReference type="EMBL" id="AP009048">
    <property type="protein sequence ID" value="BAE76359.1"/>
    <property type="molecule type" value="Genomic_DNA"/>
</dbReference>
<dbReference type="RefSeq" id="WP_000270282.1">
    <property type="nucleotide sequence ID" value="NZ_STEB01000035.1"/>
</dbReference>
<dbReference type="RefSeq" id="YP_588444.1">
    <property type="nucleotide sequence ID" value="NC_000913.3"/>
</dbReference>
<dbReference type="PDB" id="6RKO">
    <property type="method" value="EM"/>
    <property type="resolution" value="2.68 A"/>
    <property type="chains" value="X=1-37"/>
</dbReference>
<dbReference type="PDB" id="6RX4">
    <property type="method" value="EM"/>
    <property type="resolution" value="3.30 A"/>
    <property type="chains" value="C=1-37"/>
</dbReference>
<dbReference type="PDBsum" id="6RKO"/>
<dbReference type="PDBsum" id="6RX4"/>
<dbReference type="EMDB" id="EMD-10049"/>
<dbReference type="EMDB" id="EMD-4908"/>
<dbReference type="SMR" id="P56100"/>
<dbReference type="BioGRID" id="4259450">
    <property type="interactions" value="12"/>
</dbReference>
<dbReference type="ComplexPortal" id="CPX-268">
    <property type="entry name" value="Cytochrome bd-I ubiquinol oxidase complex"/>
</dbReference>
<dbReference type="FunCoup" id="P56100">
    <property type="interactions" value="206"/>
</dbReference>
<dbReference type="IntAct" id="P56100">
    <property type="interactions" value="2"/>
</dbReference>
<dbReference type="MINT" id="P56100"/>
<dbReference type="STRING" id="511145.b4515"/>
<dbReference type="TCDB" id="3.D.4.3.2">
    <property type="family name" value="the proton-translocating cytochrome oxidase (cox) superfamily"/>
</dbReference>
<dbReference type="PaxDb" id="511145-b4515"/>
<dbReference type="EnsemblBacteria" id="ABD18645">
    <property type="protein sequence ID" value="ABD18645"/>
    <property type="gene ID" value="b4515"/>
</dbReference>
<dbReference type="GeneID" id="1450246"/>
<dbReference type="GeneID" id="93776750"/>
<dbReference type="KEGG" id="ecj:JW0724"/>
<dbReference type="KEGG" id="eco:b4515"/>
<dbReference type="KEGG" id="ecoc:C3026_03685"/>
<dbReference type="PATRIC" id="fig|511145.12.peg.766"/>
<dbReference type="EchoBASE" id="EB4075"/>
<dbReference type="eggNOG" id="COG4890">
    <property type="taxonomic scope" value="Bacteria"/>
</dbReference>
<dbReference type="HOGENOM" id="CLU_207013_1_0_6"/>
<dbReference type="InParanoid" id="P56100"/>
<dbReference type="OrthoDB" id="9806372at2"/>
<dbReference type="PhylomeDB" id="P56100"/>
<dbReference type="BioCyc" id="EcoCyc:MONOMER0-2663"/>
<dbReference type="BioCyc" id="MetaCyc:MONOMER0-2663"/>
<dbReference type="BRENDA" id="7.1.1.7">
    <property type="organism ID" value="2026"/>
</dbReference>
<dbReference type="UniPathway" id="UPA00705"/>
<dbReference type="PRO" id="PR:P56100"/>
<dbReference type="Proteomes" id="UP000000625">
    <property type="component" value="Chromosome"/>
</dbReference>
<dbReference type="GO" id="GO:0070069">
    <property type="term" value="C:cytochrome complex"/>
    <property type="evidence" value="ECO:0000314"/>
    <property type="project" value="ComplexPortal"/>
</dbReference>
<dbReference type="GO" id="GO:0016020">
    <property type="term" value="C:membrane"/>
    <property type="evidence" value="ECO:0000314"/>
    <property type="project" value="ComplexPortal"/>
</dbReference>
<dbReference type="GO" id="GO:0019867">
    <property type="term" value="C:outer membrane"/>
    <property type="evidence" value="ECO:0000314"/>
    <property type="project" value="EcoCyc"/>
</dbReference>
<dbReference type="GO" id="GO:0005886">
    <property type="term" value="C:plasma membrane"/>
    <property type="evidence" value="ECO:0000314"/>
    <property type="project" value="EcoCyc"/>
</dbReference>
<dbReference type="GO" id="GO:0016679">
    <property type="term" value="F:oxidoreductase activity, acting on diphenols and related substances as donors"/>
    <property type="evidence" value="ECO:0000315"/>
    <property type="project" value="EcoCyc"/>
</dbReference>
<dbReference type="GO" id="GO:0019646">
    <property type="term" value="P:aerobic electron transport chain"/>
    <property type="evidence" value="ECO:0000303"/>
    <property type="project" value="ComplexPortal"/>
</dbReference>
<dbReference type="GO" id="GO:0006119">
    <property type="term" value="P:oxidative phosphorylation"/>
    <property type="evidence" value="ECO:0000303"/>
    <property type="project" value="ComplexPortal"/>
</dbReference>
<dbReference type="InterPro" id="IPR011724">
    <property type="entry name" value="Cyd_oper_YbgT"/>
</dbReference>
<dbReference type="InterPro" id="IPR012994">
    <property type="entry name" value="YbgT_YccB"/>
</dbReference>
<dbReference type="NCBIfam" id="TIGR02106">
    <property type="entry name" value="cyd_oper_ybgT"/>
    <property type="match status" value="1"/>
</dbReference>
<dbReference type="Pfam" id="PF08173">
    <property type="entry name" value="YbgT_YccB"/>
    <property type="match status" value="1"/>
</dbReference>
<accession>P56100</accession>
<accession>Q2EER0</accession>
<accession>Q2MBJ7</accession>
<organism>
    <name type="scientific">Escherichia coli (strain K12)</name>
    <dbReference type="NCBI Taxonomy" id="83333"/>
    <lineage>
        <taxon>Bacteria</taxon>
        <taxon>Pseudomonadati</taxon>
        <taxon>Pseudomonadota</taxon>
        <taxon>Gammaproteobacteria</taxon>
        <taxon>Enterobacterales</taxon>
        <taxon>Enterobacteriaceae</taxon>
        <taxon>Escherichia</taxon>
    </lineage>
</organism>
<gene>
    <name type="primary">cydX</name>
    <name type="synonym">ybgT</name>
    <name type="ordered locus">b4515</name>
    <name type="ordered locus">JW0724</name>
</gene>
<evidence type="ECO:0000255" key="1"/>
<evidence type="ECO:0000269" key="2">
    <source>
    </source>
</evidence>
<evidence type="ECO:0000269" key="3">
    <source>
    </source>
</evidence>
<evidence type="ECO:0000269" key="4">
    <source>
    </source>
</evidence>
<evidence type="ECO:0000269" key="5">
    <source>
    </source>
</evidence>
<evidence type="ECO:0000305" key="6"/>
<evidence type="ECO:0007829" key="7">
    <source>
        <dbReference type="PDB" id="6RKO"/>
    </source>
</evidence>